<evidence type="ECO:0000250" key="1"/>
<evidence type="ECO:0000255" key="2"/>
<evidence type="ECO:0000255" key="3">
    <source>
        <dbReference type="PROSITE-ProRule" id="PRU00653"/>
    </source>
</evidence>
<evidence type="ECO:0000256" key="4">
    <source>
        <dbReference type="SAM" id="MobiDB-lite"/>
    </source>
</evidence>
<accession>Q9QYY7</accession>
<name>ESM1_MOUSE</name>
<organism>
    <name type="scientific">Mus musculus</name>
    <name type="common">Mouse</name>
    <dbReference type="NCBI Taxonomy" id="10090"/>
    <lineage>
        <taxon>Eukaryota</taxon>
        <taxon>Metazoa</taxon>
        <taxon>Chordata</taxon>
        <taxon>Craniata</taxon>
        <taxon>Vertebrata</taxon>
        <taxon>Euteleostomi</taxon>
        <taxon>Mammalia</taxon>
        <taxon>Eutheria</taxon>
        <taxon>Euarchontoglires</taxon>
        <taxon>Glires</taxon>
        <taxon>Rodentia</taxon>
        <taxon>Myomorpha</taxon>
        <taxon>Muroidea</taxon>
        <taxon>Muridae</taxon>
        <taxon>Murinae</taxon>
        <taxon>Mus</taxon>
        <taxon>Mus</taxon>
    </lineage>
</organism>
<protein>
    <recommendedName>
        <fullName>Endothelial cell-specific molecule 1</fullName>
        <shortName>ESM-1</shortName>
    </recommendedName>
</protein>
<dbReference type="EMBL" id="AJ249354">
    <property type="protein sequence ID" value="CAB60730.1"/>
    <property type="molecule type" value="mRNA"/>
</dbReference>
<dbReference type="EMBL" id="AK002913">
    <property type="protein sequence ID" value="BAB22452.1"/>
    <property type="molecule type" value="mRNA"/>
</dbReference>
<dbReference type="EMBL" id="BC051919">
    <property type="protein sequence ID" value="AAH51919.1"/>
    <property type="molecule type" value="mRNA"/>
</dbReference>
<dbReference type="CCDS" id="CCDS26784.1"/>
<dbReference type="RefSeq" id="NP_076101.1">
    <property type="nucleotide sequence ID" value="NM_023612.3"/>
</dbReference>
<dbReference type="FunCoup" id="Q9QYY7">
    <property type="interactions" value="27"/>
</dbReference>
<dbReference type="STRING" id="10090.ENSMUSP00000040187"/>
<dbReference type="GlyCosmos" id="Q9QYY7">
    <property type="glycosylation" value="1 site, No reported glycans"/>
</dbReference>
<dbReference type="GlyGen" id="Q9QYY7">
    <property type="glycosylation" value="1 site"/>
</dbReference>
<dbReference type="PhosphoSitePlus" id="Q9QYY7"/>
<dbReference type="PaxDb" id="10090-ENSMUSP00000040187"/>
<dbReference type="ProteomicsDB" id="275951"/>
<dbReference type="Antibodypedia" id="23370">
    <property type="antibodies" value="272 antibodies from 27 providers"/>
</dbReference>
<dbReference type="DNASU" id="71690"/>
<dbReference type="Ensembl" id="ENSMUST00000038144.9">
    <property type="protein sequence ID" value="ENSMUSP00000040187.9"/>
    <property type="gene ID" value="ENSMUSG00000042379.9"/>
</dbReference>
<dbReference type="GeneID" id="71690"/>
<dbReference type="KEGG" id="mmu:71690"/>
<dbReference type="UCSC" id="uc007rxe.1">
    <property type="organism name" value="mouse"/>
</dbReference>
<dbReference type="AGR" id="MGI:1918940"/>
<dbReference type="CTD" id="11082"/>
<dbReference type="MGI" id="MGI:1918940">
    <property type="gene designation" value="Esm1"/>
</dbReference>
<dbReference type="VEuPathDB" id="HostDB:ENSMUSG00000042379"/>
<dbReference type="eggNOG" id="KOG1218">
    <property type="taxonomic scope" value="Eukaryota"/>
</dbReference>
<dbReference type="GeneTree" id="ENSGT00390000018810"/>
<dbReference type="HOGENOM" id="CLU_103395_0_0_1"/>
<dbReference type="InParanoid" id="Q9QYY7"/>
<dbReference type="OMA" id="TAWSAKY"/>
<dbReference type="OrthoDB" id="9868586at2759"/>
<dbReference type="PhylomeDB" id="Q9QYY7"/>
<dbReference type="BioGRID-ORCS" id="71690">
    <property type="hits" value="0 hits in 79 CRISPR screens"/>
</dbReference>
<dbReference type="PRO" id="PR:Q9QYY7"/>
<dbReference type="Proteomes" id="UP000000589">
    <property type="component" value="Chromosome 13"/>
</dbReference>
<dbReference type="RNAct" id="Q9QYY7">
    <property type="molecule type" value="protein"/>
</dbReference>
<dbReference type="Bgee" id="ENSMUSG00000042379">
    <property type="expression patterns" value="Expressed in pineal body and 116 other cell types or tissues"/>
</dbReference>
<dbReference type="ExpressionAtlas" id="Q9QYY7">
    <property type="expression patterns" value="baseline and differential"/>
</dbReference>
<dbReference type="GO" id="GO:0005576">
    <property type="term" value="C:extracellular region"/>
    <property type="evidence" value="ECO:0007669"/>
    <property type="project" value="UniProtKB-SubCell"/>
</dbReference>
<dbReference type="GO" id="GO:0005171">
    <property type="term" value="F:hepatocyte growth factor receptor binding"/>
    <property type="evidence" value="ECO:0007669"/>
    <property type="project" value="Ensembl"/>
</dbReference>
<dbReference type="GO" id="GO:0005178">
    <property type="term" value="F:integrin binding"/>
    <property type="evidence" value="ECO:0007669"/>
    <property type="project" value="Ensembl"/>
</dbReference>
<dbReference type="GO" id="GO:0008284">
    <property type="term" value="P:positive regulation of cell population proliferation"/>
    <property type="evidence" value="ECO:0007669"/>
    <property type="project" value="Ensembl"/>
</dbReference>
<dbReference type="GO" id="GO:1902204">
    <property type="term" value="P:positive regulation of hepatocyte growth factor receptor signaling pathway"/>
    <property type="evidence" value="ECO:0007669"/>
    <property type="project" value="Ensembl"/>
</dbReference>
<dbReference type="GO" id="GO:0002040">
    <property type="term" value="P:sprouting angiogenesis"/>
    <property type="evidence" value="ECO:0007669"/>
    <property type="project" value="Ensembl"/>
</dbReference>
<dbReference type="FunFam" id="4.10.40.20:FF:000002">
    <property type="entry name" value="Endothelial cell-specific molecule 1"/>
    <property type="match status" value="1"/>
</dbReference>
<dbReference type="Gene3D" id="4.10.40.20">
    <property type="match status" value="1"/>
</dbReference>
<dbReference type="InterPro" id="IPR038850">
    <property type="entry name" value="ESM1"/>
</dbReference>
<dbReference type="InterPro" id="IPR009030">
    <property type="entry name" value="Growth_fac_rcpt_cys_sf"/>
</dbReference>
<dbReference type="InterPro" id="IPR000867">
    <property type="entry name" value="IGFBP-like"/>
</dbReference>
<dbReference type="PANTHER" id="PTHR15428:SF0">
    <property type="entry name" value="ENDOTHELIAL CELL-SPECIFIC MOLECULE 1"/>
    <property type="match status" value="1"/>
</dbReference>
<dbReference type="PANTHER" id="PTHR15428">
    <property type="entry name" value="ENDOTHELIAL CELL-SPECIFIC MOLECULE 1 ESM-1"/>
    <property type="match status" value="1"/>
</dbReference>
<dbReference type="Pfam" id="PF00219">
    <property type="entry name" value="IGFBP"/>
    <property type="match status" value="1"/>
</dbReference>
<dbReference type="SMART" id="SM00121">
    <property type="entry name" value="IB"/>
    <property type="match status" value="1"/>
</dbReference>
<dbReference type="SUPFAM" id="SSF57184">
    <property type="entry name" value="Growth factor receptor domain"/>
    <property type="match status" value="1"/>
</dbReference>
<dbReference type="PROSITE" id="PS51323">
    <property type="entry name" value="IGFBP_N_2"/>
    <property type="match status" value="1"/>
</dbReference>
<feature type="signal peptide" evidence="2">
    <location>
        <begin position="1"/>
        <end position="21"/>
    </location>
</feature>
<feature type="chain" id="PRO_0000014395" description="Endothelial cell-specific molecule 1">
    <location>
        <begin position="22"/>
        <end position="184"/>
    </location>
</feature>
<feature type="domain" description="IGFBP N-terminal" evidence="3">
    <location>
        <begin position="24"/>
        <end position="102"/>
    </location>
</feature>
<feature type="region of interest" description="Disordered" evidence="4">
    <location>
        <begin position="145"/>
        <end position="184"/>
    </location>
</feature>
<feature type="compositionally biased region" description="Basic and acidic residues" evidence="4">
    <location>
        <begin position="150"/>
        <end position="167"/>
    </location>
</feature>
<feature type="glycosylation site" description="O-linked (Xyl...) (chondroitin sulfate) serine" evidence="1">
    <location>
        <position position="157"/>
    </location>
</feature>
<feature type="disulfide bond" evidence="3">
    <location>
        <begin position="28"/>
        <end position="51"/>
    </location>
</feature>
<feature type="disulfide bond" evidence="3">
    <location>
        <begin position="32"/>
        <end position="53"/>
    </location>
</feature>
<feature type="disulfide bond" evidence="3">
    <location>
        <begin position="37"/>
        <end position="54"/>
    </location>
</feature>
<feature type="disulfide bond" evidence="3">
    <location>
        <begin position="43"/>
        <end position="57"/>
    </location>
</feature>
<feature type="disulfide bond" evidence="3">
    <location>
        <begin position="65"/>
        <end position="83"/>
    </location>
</feature>
<feature type="disulfide bond" evidence="3">
    <location>
        <begin position="77"/>
        <end position="99"/>
    </location>
</feature>
<sequence length="184" mass="20043">MKSLLLLTTLLVPLHLGMAWSAKYAVDCPEHCDKTECRSSLRCKRTVLDDCGCCQVCAAGPGETCYRTVSGMDGVKCGPGLKCHFYSEEDDFGDEFGICKDCPYGTFGMECKETCNCQSGICDRVTGRCLDFPFFQYAAAKSPSRTSASHTERDSASGDGNAVREEIGEGNAARPSVMKWLNPR</sequence>
<proteinExistence type="evidence at transcript level"/>
<comment type="function">
    <text evidence="1">Involved in angiogenesis; promotes angiogenic sprouting. May have potent implications in lung endothelial cell-leukocyte interactions (By similarity).</text>
</comment>
<comment type="subcellular location">
    <subcellularLocation>
        <location evidence="1">Secreted</location>
    </subcellularLocation>
</comment>
<comment type="PTM">
    <text evidence="1">O-glycosylated; contains chondroitin sulfate and dermatan sulfate.</text>
</comment>
<keyword id="KW-0037">Angiogenesis</keyword>
<keyword id="KW-1015">Disulfide bond</keyword>
<keyword id="KW-0325">Glycoprotein</keyword>
<keyword id="KW-0654">Proteoglycan</keyword>
<keyword id="KW-1185">Reference proteome</keyword>
<keyword id="KW-0964">Secreted</keyword>
<keyword id="KW-0732">Signal</keyword>
<reference key="1">
    <citation type="submission" date="1999-09" db="EMBL/GenBank/DDBJ databases">
        <authorList>
            <person name="Lassalle P."/>
        </authorList>
    </citation>
    <scope>NUCLEOTIDE SEQUENCE [MRNA]</scope>
    <source>
        <strain>BALB/cJ</strain>
        <tissue>Lung</tissue>
    </source>
</reference>
<reference key="2">
    <citation type="journal article" date="2005" name="Science">
        <title>The transcriptional landscape of the mammalian genome.</title>
        <authorList>
            <person name="Carninci P."/>
            <person name="Kasukawa T."/>
            <person name="Katayama S."/>
            <person name="Gough J."/>
            <person name="Frith M.C."/>
            <person name="Maeda N."/>
            <person name="Oyama R."/>
            <person name="Ravasi T."/>
            <person name="Lenhard B."/>
            <person name="Wells C."/>
            <person name="Kodzius R."/>
            <person name="Shimokawa K."/>
            <person name="Bajic V.B."/>
            <person name="Brenner S.E."/>
            <person name="Batalov S."/>
            <person name="Forrest A.R."/>
            <person name="Zavolan M."/>
            <person name="Davis M.J."/>
            <person name="Wilming L.G."/>
            <person name="Aidinis V."/>
            <person name="Allen J.E."/>
            <person name="Ambesi-Impiombato A."/>
            <person name="Apweiler R."/>
            <person name="Aturaliya R.N."/>
            <person name="Bailey T.L."/>
            <person name="Bansal M."/>
            <person name="Baxter L."/>
            <person name="Beisel K.W."/>
            <person name="Bersano T."/>
            <person name="Bono H."/>
            <person name="Chalk A.M."/>
            <person name="Chiu K.P."/>
            <person name="Choudhary V."/>
            <person name="Christoffels A."/>
            <person name="Clutterbuck D.R."/>
            <person name="Crowe M.L."/>
            <person name="Dalla E."/>
            <person name="Dalrymple B.P."/>
            <person name="de Bono B."/>
            <person name="Della Gatta G."/>
            <person name="di Bernardo D."/>
            <person name="Down T."/>
            <person name="Engstrom P."/>
            <person name="Fagiolini M."/>
            <person name="Faulkner G."/>
            <person name="Fletcher C.F."/>
            <person name="Fukushima T."/>
            <person name="Furuno M."/>
            <person name="Futaki S."/>
            <person name="Gariboldi M."/>
            <person name="Georgii-Hemming P."/>
            <person name="Gingeras T.R."/>
            <person name="Gojobori T."/>
            <person name="Green R.E."/>
            <person name="Gustincich S."/>
            <person name="Harbers M."/>
            <person name="Hayashi Y."/>
            <person name="Hensch T.K."/>
            <person name="Hirokawa N."/>
            <person name="Hill D."/>
            <person name="Huminiecki L."/>
            <person name="Iacono M."/>
            <person name="Ikeo K."/>
            <person name="Iwama A."/>
            <person name="Ishikawa T."/>
            <person name="Jakt M."/>
            <person name="Kanapin A."/>
            <person name="Katoh M."/>
            <person name="Kawasawa Y."/>
            <person name="Kelso J."/>
            <person name="Kitamura H."/>
            <person name="Kitano H."/>
            <person name="Kollias G."/>
            <person name="Krishnan S.P."/>
            <person name="Kruger A."/>
            <person name="Kummerfeld S.K."/>
            <person name="Kurochkin I.V."/>
            <person name="Lareau L.F."/>
            <person name="Lazarevic D."/>
            <person name="Lipovich L."/>
            <person name="Liu J."/>
            <person name="Liuni S."/>
            <person name="McWilliam S."/>
            <person name="Madan Babu M."/>
            <person name="Madera M."/>
            <person name="Marchionni L."/>
            <person name="Matsuda H."/>
            <person name="Matsuzawa S."/>
            <person name="Miki H."/>
            <person name="Mignone F."/>
            <person name="Miyake S."/>
            <person name="Morris K."/>
            <person name="Mottagui-Tabar S."/>
            <person name="Mulder N."/>
            <person name="Nakano N."/>
            <person name="Nakauchi H."/>
            <person name="Ng P."/>
            <person name="Nilsson R."/>
            <person name="Nishiguchi S."/>
            <person name="Nishikawa S."/>
            <person name="Nori F."/>
            <person name="Ohara O."/>
            <person name="Okazaki Y."/>
            <person name="Orlando V."/>
            <person name="Pang K.C."/>
            <person name="Pavan W.J."/>
            <person name="Pavesi G."/>
            <person name="Pesole G."/>
            <person name="Petrovsky N."/>
            <person name="Piazza S."/>
            <person name="Reed J."/>
            <person name="Reid J.F."/>
            <person name="Ring B.Z."/>
            <person name="Ringwald M."/>
            <person name="Rost B."/>
            <person name="Ruan Y."/>
            <person name="Salzberg S.L."/>
            <person name="Sandelin A."/>
            <person name="Schneider C."/>
            <person name="Schoenbach C."/>
            <person name="Sekiguchi K."/>
            <person name="Semple C.A."/>
            <person name="Seno S."/>
            <person name="Sessa L."/>
            <person name="Sheng Y."/>
            <person name="Shibata Y."/>
            <person name="Shimada H."/>
            <person name="Shimada K."/>
            <person name="Silva D."/>
            <person name="Sinclair B."/>
            <person name="Sperling S."/>
            <person name="Stupka E."/>
            <person name="Sugiura K."/>
            <person name="Sultana R."/>
            <person name="Takenaka Y."/>
            <person name="Taki K."/>
            <person name="Tammoja K."/>
            <person name="Tan S.L."/>
            <person name="Tang S."/>
            <person name="Taylor M.S."/>
            <person name="Tegner J."/>
            <person name="Teichmann S.A."/>
            <person name="Ueda H.R."/>
            <person name="van Nimwegen E."/>
            <person name="Verardo R."/>
            <person name="Wei C.L."/>
            <person name="Yagi K."/>
            <person name="Yamanishi H."/>
            <person name="Zabarovsky E."/>
            <person name="Zhu S."/>
            <person name="Zimmer A."/>
            <person name="Hide W."/>
            <person name="Bult C."/>
            <person name="Grimmond S.M."/>
            <person name="Teasdale R.D."/>
            <person name="Liu E.T."/>
            <person name="Brusic V."/>
            <person name="Quackenbush J."/>
            <person name="Wahlestedt C."/>
            <person name="Mattick J.S."/>
            <person name="Hume D.A."/>
            <person name="Kai C."/>
            <person name="Sasaki D."/>
            <person name="Tomaru Y."/>
            <person name="Fukuda S."/>
            <person name="Kanamori-Katayama M."/>
            <person name="Suzuki M."/>
            <person name="Aoki J."/>
            <person name="Arakawa T."/>
            <person name="Iida J."/>
            <person name="Imamura K."/>
            <person name="Itoh M."/>
            <person name="Kato T."/>
            <person name="Kawaji H."/>
            <person name="Kawagashira N."/>
            <person name="Kawashima T."/>
            <person name="Kojima M."/>
            <person name="Kondo S."/>
            <person name="Konno H."/>
            <person name="Nakano K."/>
            <person name="Ninomiya N."/>
            <person name="Nishio T."/>
            <person name="Okada M."/>
            <person name="Plessy C."/>
            <person name="Shibata K."/>
            <person name="Shiraki T."/>
            <person name="Suzuki S."/>
            <person name="Tagami M."/>
            <person name="Waki K."/>
            <person name="Watahiki A."/>
            <person name="Okamura-Oho Y."/>
            <person name="Suzuki H."/>
            <person name="Kawai J."/>
            <person name="Hayashizaki Y."/>
        </authorList>
    </citation>
    <scope>NUCLEOTIDE SEQUENCE [LARGE SCALE MRNA]</scope>
    <source>
        <strain>C57BL/6J</strain>
        <tissue>Kidney</tissue>
    </source>
</reference>
<reference key="3">
    <citation type="journal article" date="2004" name="Genome Res.">
        <title>The status, quality, and expansion of the NIH full-length cDNA project: the Mammalian Gene Collection (MGC).</title>
        <authorList>
            <consortium name="The MGC Project Team"/>
        </authorList>
    </citation>
    <scope>NUCLEOTIDE SEQUENCE [LARGE SCALE MRNA]</scope>
    <source>
        <strain>C57BL/6J</strain>
        <tissue>Brain</tissue>
    </source>
</reference>
<gene>
    <name type="primary">Esm1</name>
</gene>